<keyword id="KW-0687">Ribonucleoprotein</keyword>
<keyword id="KW-0689">Ribosomal protein</keyword>
<gene>
    <name evidence="1" type="primary">rpmB</name>
    <name type="ordered locus">Mrad2831_3701</name>
</gene>
<dbReference type="EMBL" id="CP001001">
    <property type="protein sequence ID" value="ACB25677.1"/>
    <property type="molecule type" value="Genomic_DNA"/>
</dbReference>
<dbReference type="RefSeq" id="WP_012320636.1">
    <property type="nucleotide sequence ID" value="NC_010505.1"/>
</dbReference>
<dbReference type="SMR" id="B1LW27"/>
<dbReference type="STRING" id="426355.Mrad2831_3701"/>
<dbReference type="GeneID" id="6139754"/>
<dbReference type="KEGG" id="mrd:Mrad2831_3701"/>
<dbReference type="eggNOG" id="COG0227">
    <property type="taxonomic scope" value="Bacteria"/>
</dbReference>
<dbReference type="HOGENOM" id="CLU_064548_4_2_5"/>
<dbReference type="OrthoDB" id="9805609at2"/>
<dbReference type="Proteomes" id="UP000006589">
    <property type="component" value="Chromosome"/>
</dbReference>
<dbReference type="GO" id="GO:0022625">
    <property type="term" value="C:cytosolic large ribosomal subunit"/>
    <property type="evidence" value="ECO:0007669"/>
    <property type="project" value="TreeGrafter"/>
</dbReference>
<dbReference type="GO" id="GO:0003735">
    <property type="term" value="F:structural constituent of ribosome"/>
    <property type="evidence" value="ECO:0007669"/>
    <property type="project" value="InterPro"/>
</dbReference>
<dbReference type="GO" id="GO:0006412">
    <property type="term" value="P:translation"/>
    <property type="evidence" value="ECO:0007669"/>
    <property type="project" value="UniProtKB-UniRule"/>
</dbReference>
<dbReference type="Gene3D" id="2.30.170.40">
    <property type="entry name" value="Ribosomal protein L28/L24"/>
    <property type="match status" value="1"/>
</dbReference>
<dbReference type="HAMAP" id="MF_00373">
    <property type="entry name" value="Ribosomal_bL28"/>
    <property type="match status" value="1"/>
</dbReference>
<dbReference type="InterPro" id="IPR026569">
    <property type="entry name" value="Ribosomal_bL28"/>
</dbReference>
<dbReference type="InterPro" id="IPR034704">
    <property type="entry name" value="Ribosomal_bL28/bL31-like_sf"/>
</dbReference>
<dbReference type="InterPro" id="IPR001383">
    <property type="entry name" value="Ribosomal_bL28_bact-type"/>
</dbReference>
<dbReference type="InterPro" id="IPR037147">
    <property type="entry name" value="Ribosomal_bL28_sf"/>
</dbReference>
<dbReference type="NCBIfam" id="TIGR00009">
    <property type="entry name" value="L28"/>
    <property type="match status" value="1"/>
</dbReference>
<dbReference type="PANTHER" id="PTHR13528">
    <property type="entry name" value="39S RIBOSOMAL PROTEIN L28, MITOCHONDRIAL"/>
    <property type="match status" value="1"/>
</dbReference>
<dbReference type="PANTHER" id="PTHR13528:SF2">
    <property type="entry name" value="LARGE RIBOSOMAL SUBUNIT PROTEIN BL28M"/>
    <property type="match status" value="1"/>
</dbReference>
<dbReference type="Pfam" id="PF00830">
    <property type="entry name" value="Ribosomal_L28"/>
    <property type="match status" value="1"/>
</dbReference>
<dbReference type="SUPFAM" id="SSF143800">
    <property type="entry name" value="L28p-like"/>
    <property type="match status" value="1"/>
</dbReference>
<feature type="chain" id="PRO_1000121657" description="Large ribosomal subunit protein bL28">
    <location>
        <begin position="1"/>
        <end position="100"/>
    </location>
</feature>
<reference key="1">
    <citation type="submission" date="2008-03" db="EMBL/GenBank/DDBJ databases">
        <title>Complete sequence of chromosome of Methylobacterium radiotolerans JCM 2831.</title>
        <authorList>
            <consortium name="US DOE Joint Genome Institute"/>
            <person name="Copeland A."/>
            <person name="Lucas S."/>
            <person name="Lapidus A."/>
            <person name="Glavina del Rio T."/>
            <person name="Dalin E."/>
            <person name="Tice H."/>
            <person name="Bruce D."/>
            <person name="Goodwin L."/>
            <person name="Pitluck S."/>
            <person name="Kiss H."/>
            <person name="Brettin T."/>
            <person name="Detter J.C."/>
            <person name="Han C."/>
            <person name="Kuske C.R."/>
            <person name="Schmutz J."/>
            <person name="Larimer F."/>
            <person name="Land M."/>
            <person name="Hauser L."/>
            <person name="Kyrpides N."/>
            <person name="Mikhailova N."/>
            <person name="Marx C.J."/>
            <person name="Richardson P."/>
        </authorList>
    </citation>
    <scope>NUCLEOTIDE SEQUENCE [LARGE SCALE GENOMIC DNA]</scope>
    <source>
        <strain>ATCC 27329 / DSM 1819 / JCM 2831 / NBRC 15690 / NCIMB 10815 / 0-1</strain>
    </source>
</reference>
<comment type="similarity">
    <text evidence="1">Belongs to the bacterial ribosomal protein bL28 family.</text>
</comment>
<sequence length="100" mass="10964">MARRCELTGKAVQVGHLVSHSNRKTKCRFLPNLCNVTLQSDALGKRVRLRVTAHALRSVEHRGGLDAFLIKAGEGDLSQTARLLKREIHKKLAETPAAAA</sequence>
<name>RL28_METRJ</name>
<protein>
    <recommendedName>
        <fullName evidence="1">Large ribosomal subunit protein bL28</fullName>
    </recommendedName>
    <alternativeName>
        <fullName evidence="2">50S ribosomal protein L28</fullName>
    </alternativeName>
</protein>
<proteinExistence type="inferred from homology"/>
<organism>
    <name type="scientific">Methylobacterium radiotolerans (strain ATCC 27329 / DSM 1819 / JCM 2831 / NBRC 15690 / NCIMB 10815 / 0-1)</name>
    <dbReference type="NCBI Taxonomy" id="426355"/>
    <lineage>
        <taxon>Bacteria</taxon>
        <taxon>Pseudomonadati</taxon>
        <taxon>Pseudomonadota</taxon>
        <taxon>Alphaproteobacteria</taxon>
        <taxon>Hyphomicrobiales</taxon>
        <taxon>Methylobacteriaceae</taxon>
        <taxon>Methylobacterium</taxon>
    </lineage>
</organism>
<accession>B1LW27</accession>
<evidence type="ECO:0000255" key="1">
    <source>
        <dbReference type="HAMAP-Rule" id="MF_00373"/>
    </source>
</evidence>
<evidence type="ECO:0000305" key="2"/>